<sequence length="103" mass="11725">MVYKARISLSGTENKIVDVVCEEIKGIAKRTGVEIHGPIPLPTKRLVVPVRKSPDGEGSPTWDRWEMRVHKRLIDVDADERTLRQLMRISIPDGVRIEIQIKS</sequence>
<accession>Q6L201</accession>
<keyword id="KW-0687">Ribonucleoprotein</keyword>
<keyword id="KW-0689">Ribosomal protein</keyword>
<organism>
    <name type="scientific">Picrophilus torridus (strain ATCC 700027 / DSM 9790 / JCM 10055 / NBRC 100828 / KAW 2/3)</name>
    <dbReference type="NCBI Taxonomy" id="1122961"/>
    <lineage>
        <taxon>Archaea</taxon>
        <taxon>Methanobacteriati</taxon>
        <taxon>Thermoplasmatota</taxon>
        <taxon>Thermoplasmata</taxon>
        <taxon>Thermoplasmatales</taxon>
        <taxon>Picrophilaceae</taxon>
        <taxon>Picrophilus</taxon>
    </lineage>
</organism>
<reference key="1">
    <citation type="journal article" date="2004" name="Proc. Natl. Acad. Sci. U.S.A.">
        <title>Genome sequence of Picrophilus torridus and its implications for life around pH 0.</title>
        <authorList>
            <person name="Fuetterer O."/>
            <person name="Angelov A."/>
            <person name="Liesegang H."/>
            <person name="Gottschalk G."/>
            <person name="Schleper C."/>
            <person name="Schepers B."/>
            <person name="Dock C."/>
            <person name="Antranikian G."/>
            <person name="Liebl W."/>
        </authorList>
    </citation>
    <scope>NUCLEOTIDE SEQUENCE [LARGE SCALE GENOMIC DNA]</scope>
    <source>
        <strain>ATCC 700027 / DSM 9790 / JCM 10055 / NBRC 100828 / KAW 2/3</strain>
    </source>
</reference>
<gene>
    <name evidence="1" type="primary">rps10</name>
    <name type="ordered locus">PTO0416</name>
</gene>
<feature type="chain" id="PRO_0000146652" description="Small ribosomal subunit protein uS10">
    <location>
        <begin position="1"/>
        <end position="103"/>
    </location>
</feature>
<proteinExistence type="inferred from homology"/>
<protein>
    <recommendedName>
        <fullName evidence="1">Small ribosomal subunit protein uS10</fullName>
    </recommendedName>
    <alternativeName>
        <fullName evidence="2">30S ribosomal protein S10</fullName>
    </alternativeName>
</protein>
<evidence type="ECO:0000255" key="1">
    <source>
        <dbReference type="HAMAP-Rule" id="MF_00508"/>
    </source>
</evidence>
<evidence type="ECO:0000305" key="2"/>
<name>RS10_PICTO</name>
<dbReference type="EMBL" id="AE017261">
    <property type="protein sequence ID" value="AAT43001.1"/>
    <property type="molecule type" value="Genomic_DNA"/>
</dbReference>
<dbReference type="RefSeq" id="WP_011177217.1">
    <property type="nucleotide sequence ID" value="NC_005877.1"/>
</dbReference>
<dbReference type="SMR" id="Q6L201"/>
<dbReference type="FunCoup" id="Q6L201">
    <property type="interactions" value="168"/>
</dbReference>
<dbReference type="STRING" id="263820.PTO0416"/>
<dbReference type="PaxDb" id="263820-PTO0416"/>
<dbReference type="GeneID" id="2844471"/>
<dbReference type="KEGG" id="pto:PTO0416"/>
<dbReference type="PATRIC" id="fig|263820.9.peg.441"/>
<dbReference type="eggNOG" id="arCOG01758">
    <property type="taxonomic scope" value="Archaea"/>
</dbReference>
<dbReference type="HOGENOM" id="CLU_122625_0_1_2"/>
<dbReference type="InParanoid" id="Q6L201"/>
<dbReference type="OrthoDB" id="371736at2157"/>
<dbReference type="Proteomes" id="UP000000438">
    <property type="component" value="Chromosome"/>
</dbReference>
<dbReference type="GO" id="GO:0015935">
    <property type="term" value="C:small ribosomal subunit"/>
    <property type="evidence" value="ECO:0007669"/>
    <property type="project" value="InterPro"/>
</dbReference>
<dbReference type="GO" id="GO:0003735">
    <property type="term" value="F:structural constituent of ribosome"/>
    <property type="evidence" value="ECO:0007669"/>
    <property type="project" value="InterPro"/>
</dbReference>
<dbReference type="GO" id="GO:0000049">
    <property type="term" value="F:tRNA binding"/>
    <property type="evidence" value="ECO:0007669"/>
    <property type="project" value="UniProtKB-UniRule"/>
</dbReference>
<dbReference type="GO" id="GO:0006412">
    <property type="term" value="P:translation"/>
    <property type="evidence" value="ECO:0007669"/>
    <property type="project" value="UniProtKB-UniRule"/>
</dbReference>
<dbReference type="FunFam" id="3.30.70.600:FF:000004">
    <property type="entry name" value="30S ribosomal protein S10"/>
    <property type="match status" value="1"/>
</dbReference>
<dbReference type="Gene3D" id="3.30.70.600">
    <property type="entry name" value="Ribosomal protein S10 domain"/>
    <property type="match status" value="1"/>
</dbReference>
<dbReference type="HAMAP" id="MF_00508">
    <property type="entry name" value="Ribosomal_uS10"/>
    <property type="match status" value="1"/>
</dbReference>
<dbReference type="InterPro" id="IPR001848">
    <property type="entry name" value="Ribosomal_uS10"/>
</dbReference>
<dbReference type="InterPro" id="IPR018268">
    <property type="entry name" value="Ribosomal_uS10_CS"/>
</dbReference>
<dbReference type="InterPro" id="IPR027486">
    <property type="entry name" value="Ribosomal_uS10_dom"/>
</dbReference>
<dbReference type="InterPro" id="IPR036838">
    <property type="entry name" value="Ribosomal_uS10_dom_sf"/>
</dbReference>
<dbReference type="InterPro" id="IPR005729">
    <property type="entry name" value="Ribosomal_uS10_euk/arc"/>
</dbReference>
<dbReference type="NCBIfam" id="TIGR01046">
    <property type="entry name" value="uS10_euk_arch"/>
    <property type="match status" value="1"/>
</dbReference>
<dbReference type="PANTHER" id="PTHR11700">
    <property type="entry name" value="30S RIBOSOMAL PROTEIN S10 FAMILY MEMBER"/>
    <property type="match status" value="1"/>
</dbReference>
<dbReference type="Pfam" id="PF00338">
    <property type="entry name" value="Ribosomal_S10"/>
    <property type="match status" value="1"/>
</dbReference>
<dbReference type="PRINTS" id="PR00971">
    <property type="entry name" value="RIBOSOMALS10"/>
</dbReference>
<dbReference type="SMART" id="SM01403">
    <property type="entry name" value="Ribosomal_S10"/>
    <property type="match status" value="1"/>
</dbReference>
<dbReference type="SUPFAM" id="SSF54999">
    <property type="entry name" value="Ribosomal protein S10"/>
    <property type="match status" value="1"/>
</dbReference>
<dbReference type="PROSITE" id="PS00361">
    <property type="entry name" value="RIBOSOMAL_S10"/>
    <property type="match status" value="1"/>
</dbReference>
<comment type="function">
    <text evidence="1">Involved in the binding of tRNA to the ribosomes.</text>
</comment>
<comment type="subunit">
    <text evidence="1">Part of the 30S ribosomal subunit.</text>
</comment>
<comment type="similarity">
    <text evidence="1">Belongs to the universal ribosomal protein uS10 family.</text>
</comment>